<comment type="function">
    <text evidence="1">Catalyzes the thiamine diphosphate-dependent decarboxylation of 2-oxoglutarate and the subsequent addition of the resulting succinic semialdehyde-thiamine pyrophosphate anion to isochorismate to yield 2-succinyl-5-enolpyruvyl-6-hydroxy-3-cyclohexene-1-carboxylate (SEPHCHC).</text>
</comment>
<comment type="catalytic activity">
    <reaction evidence="1">
        <text>isochorismate + 2-oxoglutarate + H(+) = 5-enolpyruvoyl-6-hydroxy-2-succinyl-cyclohex-3-ene-1-carboxylate + CO2</text>
        <dbReference type="Rhea" id="RHEA:25593"/>
        <dbReference type="ChEBI" id="CHEBI:15378"/>
        <dbReference type="ChEBI" id="CHEBI:16526"/>
        <dbReference type="ChEBI" id="CHEBI:16810"/>
        <dbReference type="ChEBI" id="CHEBI:29780"/>
        <dbReference type="ChEBI" id="CHEBI:58818"/>
        <dbReference type="EC" id="2.2.1.9"/>
    </reaction>
</comment>
<comment type="cofactor">
    <cofactor evidence="1">
        <name>Mg(2+)</name>
        <dbReference type="ChEBI" id="CHEBI:18420"/>
    </cofactor>
    <cofactor evidence="1">
        <name>Mn(2+)</name>
        <dbReference type="ChEBI" id="CHEBI:29035"/>
    </cofactor>
</comment>
<comment type="cofactor">
    <cofactor evidence="1">
        <name>thiamine diphosphate</name>
        <dbReference type="ChEBI" id="CHEBI:58937"/>
    </cofactor>
    <text evidence="1">Binds 1 thiamine pyrophosphate per subunit.</text>
</comment>
<comment type="pathway">
    <text evidence="1">Quinol/quinone metabolism; 1,4-dihydroxy-2-naphthoate biosynthesis; 1,4-dihydroxy-2-naphthoate from chorismate: step 2/7.</text>
</comment>
<comment type="pathway">
    <text evidence="1">Quinol/quinone metabolism; menaquinone biosynthesis.</text>
</comment>
<comment type="subunit">
    <text evidence="1">Homodimer.</text>
</comment>
<comment type="similarity">
    <text evidence="1">Belongs to the TPP enzyme family. MenD subfamily.</text>
</comment>
<proteinExistence type="inferred from homology"/>
<reference key="1">
    <citation type="journal article" date="2008" name="Antimicrob. Agents Chemother.">
        <title>Mutated response regulator graR is responsible for phenotypic conversion of Staphylococcus aureus from heterogeneous vancomycin-intermediate resistance to vancomycin-intermediate resistance.</title>
        <authorList>
            <person name="Neoh H.-M."/>
            <person name="Cui L."/>
            <person name="Yuzawa H."/>
            <person name="Takeuchi F."/>
            <person name="Matsuo M."/>
            <person name="Hiramatsu K."/>
        </authorList>
    </citation>
    <scope>NUCLEOTIDE SEQUENCE [LARGE SCALE GENOMIC DNA]</scope>
    <source>
        <strain>Mu3 / ATCC 700698</strain>
    </source>
</reference>
<sequence>MGNHKAALTKQVFTFASELYAYGVREVVISPGSRSTPLALAFEAHPNIKTWIHPDERSAAFFAVGLIKGSERPVAILCTSGTAAANYTPAIAESQISRIPLIVLTSDRPHELRSVGAPQAINQVNMFNNYVSYEFDMPIADDSKETINAIYYQMQIASQYLYGPHKGPIHFNLPFRDPLTPDLNATELLTSEMKILPHYQKSIDASALRHILNKKKGLIIVGDMQHQEVDQILTYSTIYDLPILADPLSHLRKFDHPNVICTYDLLFRSGLDLNVDFVIRVGKPVISKKLNQWLKKTDAFQILVQNNDKIDVFPIAPDISYEISANDFFRSLMEDTTINRVSWLEKWQCLEKKGRKEIKCYLEQATDESAFVGELIKKTSEKDALFISNSMPIRDVDNLLLNKNIDVYANRGANGIDGIVSTALGMAVHKRITLLIGDLSFYHDMNGLLMSKLNNIQMNIVLLNNDGGGIFSYLPQKESATDYFERLFGTPTGLDFEYTAKLYQFDFKRFNSVSEFKNATLLSETSTIYELITNREDNFKQHQILYQKLSEMIHDTL</sequence>
<protein>
    <recommendedName>
        <fullName evidence="1">2-succinyl-5-enolpyruvyl-6-hydroxy-3-cyclohexene-1-carboxylate synthase</fullName>
        <shortName evidence="1">SEPHCHC synthase</shortName>
        <ecNumber evidence="1">2.2.1.9</ecNumber>
    </recommendedName>
    <alternativeName>
        <fullName evidence="1">Menaquinone biosynthesis protein MenD</fullName>
    </alternativeName>
</protein>
<feature type="chain" id="PRO_0000341855" description="2-succinyl-5-enolpyruvyl-6-hydroxy-3-cyclohexene-1-carboxylate synthase">
    <location>
        <begin position="1"/>
        <end position="557"/>
    </location>
</feature>
<evidence type="ECO:0000255" key="1">
    <source>
        <dbReference type="HAMAP-Rule" id="MF_01659"/>
    </source>
</evidence>
<name>MEND_STAA1</name>
<keyword id="KW-0460">Magnesium</keyword>
<keyword id="KW-0464">Manganese</keyword>
<keyword id="KW-0474">Menaquinone biosynthesis</keyword>
<keyword id="KW-0479">Metal-binding</keyword>
<keyword id="KW-0786">Thiamine pyrophosphate</keyword>
<keyword id="KW-0808">Transferase</keyword>
<gene>
    <name evidence="1" type="primary">menD</name>
    <name type="ordered locus">SAHV_1036</name>
</gene>
<organism>
    <name type="scientific">Staphylococcus aureus (strain Mu3 / ATCC 700698)</name>
    <dbReference type="NCBI Taxonomy" id="418127"/>
    <lineage>
        <taxon>Bacteria</taxon>
        <taxon>Bacillati</taxon>
        <taxon>Bacillota</taxon>
        <taxon>Bacilli</taxon>
        <taxon>Bacillales</taxon>
        <taxon>Staphylococcaceae</taxon>
        <taxon>Staphylococcus</taxon>
    </lineage>
</organism>
<accession>A7X0S7</accession>
<dbReference type="EC" id="2.2.1.9" evidence="1"/>
<dbReference type="EMBL" id="AP009324">
    <property type="protein sequence ID" value="BAF77919.1"/>
    <property type="molecule type" value="Genomic_DNA"/>
</dbReference>
<dbReference type="RefSeq" id="WP_000526694.1">
    <property type="nucleotide sequence ID" value="NC_009782.1"/>
</dbReference>
<dbReference type="SMR" id="A7X0S7"/>
<dbReference type="KEGG" id="saw:SAHV_1036"/>
<dbReference type="HOGENOM" id="CLU_006051_3_0_9"/>
<dbReference type="UniPathway" id="UPA00079"/>
<dbReference type="UniPathway" id="UPA01057">
    <property type="reaction ID" value="UER00164"/>
</dbReference>
<dbReference type="GO" id="GO:0070204">
    <property type="term" value="F:2-succinyl-5-enolpyruvyl-6-hydroxy-3-cyclohexene-1-carboxylic-acid synthase activity"/>
    <property type="evidence" value="ECO:0007669"/>
    <property type="project" value="UniProtKB-UniRule"/>
</dbReference>
<dbReference type="GO" id="GO:0000287">
    <property type="term" value="F:magnesium ion binding"/>
    <property type="evidence" value="ECO:0007669"/>
    <property type="project" value="UniProtKB-UniRule"/>
</dbReference>
<dbReference type="GO" id="GO:0030145">
    <property type="term" value="F:manganese ion binding"/>
    <property type="evidence" value="ECO:0007669"/>
    <property type="project" value="UniProtKB-UniRule"/>
</dbReference>
<dbReference type="GO" id="GO:0030976">
    <property type="term" value="F:thiamine pyrophosphate binding"/>
    <property type="evidence" value="ECO:0007669"/>
    <property type="project" value="UniProtKB-UniRule"/>
</dbReference>
<dbReference type="GO" id="GO:0009234">
    <property type="term" value="P:menaquinone biosynthetic process"/>
    <property type="evidence" value="ECO:0007669"/>
    <property type="project" value="UniProtKB-UniRule"/>
</dbReference>
<dbReference type="CDD" id="cd07037">
    <property type="entry name" value="TPP_PYR_MenD"/>
    <property type="match status" value="1"/>
</dbReference>
<dbReference type="CDD" id="cd02009">
    <property type="entry name" value="TPP_SHCHC_synthase"/>
    <property type="match status" value="1"/>
</dbReference>
<dbReference type="Gene3D" id="3.40.50.970">
    <property type="match status" value="2"/>
</dbReference>
<dbReference type="Gene3D" id="3.40.50.1220">
    <property type="entry name" value="TPP-binding domain"/>
    <property type="match status" value="1"/>
</dbReference>
<dbReference type="HAMAP" id="MF_01659">
    <property type="entry name" value="MenD"/>
    <property type="match status" value="1"/>
</dbReference>
<dbReference type="InterPro" id="IPR004433">
    <property type="entry name" value="MenaQ_synth_MenD"/>
</dbReference>
<dbReference type="InterPro" id="IPR032264">
    <property type="entry name" value="MenD_middle"/>
</dbReference>
<dbReference type="InterPro" id="IPR029061">
    <property type="entry name" value="THDP-binding"/>
</dbReference>
<dbReference type="InterPro" id="IPR012001">
    <property type="entry name" value="Thiamin_PyroP_enz_TPP-bd_dom"/>
</dbReference>
<dbReference type="InterPro" id="IPR011766">
    <property type="entry name" value="TPP_enzyme_TPP-bd"/>
</dbReference>
<dbReference type="NCBIfam" id="TIGR00173">
    <property type="entry name" value="menD"/>
    <property type="match status" value="1"/>
</dbReference>
<dbReference type="PANTHER" id="PTHR42916">
    <property type="entry name" value="2-SUCCINYL-5-ENOLPYRUVYL-6-HYDROXY-3-CYCLOHEXENE-1-CARBOXYLATE SYNTHASE"/>
    <property type="match status" value="1"/>
</dbReference>
<dbReference type="PANTHER" id="PTHR42916:SF1">
    <property type="entry name" value="PROTEIN PHYLLO, CHLOROPLASTIC"/>
    <property type="match status" value="1"/>
</dbReference>
<dbReference type="Pfam" id="PF02775">
    <property type="entry name" value="TPP_enzyme_C"/>
    <property type="match status" value="1"/>
</dbReference>
<dbReference type="Pfam" id="PF16582">
    <property type="entry name" value="TPP_enzyme_M_2"/>
    <property type="match status" value="1"/>
</dbReference>
<dbReference type="Pfam" id="PF02776">
    <property type="entry name" value="TPP_enzyme_N"/>
    <property type="match status" value="1"/>
</dbReference>
<dbReference type="PIRSF" id="PIRSF004983">
    <property type="entry name" value="MenD"/>
    <property type="match status" value="1"/>
</dbReference>
<dbReference type="SUPFAM" id="SSF52518">
    <property type="entry name" value="Thiamin diphosphate-binding fold (THDP-binding)"/>
    <property type="match status" value="2"/>
</dbReference>